<comment type="function">
    <text evidence="5">Ribosome-inactivating protein of type 1, inhibits protein synthesis in animal cells. Inhibits cell-free translation in rabbit reticulocyte lysate system with an IC(50) of 0.17 nM.</text>
</comment>
<comment type="catalytic activity">
    <reaction evidence="5">
        <text>Endohydrolysis of the N-glycosidic bond at one specific adenosine on the 28S rRNA.</text>
        <dbReference type="EC" id="3.2.2.22"/>
    </reaction>
</comment>
<comment type="subunit">
    <text evidence="3">Monomer.</text>
</comment>
<comment type="mass spectrometry"/>
<comment type="similarity">
    <text evidence="2">Belongs to the ribosome-inactivating protein family. Type 1 RIP subfamily.</text>
</comment>
<evidence type="ECO:0000250" key="1">
    <source>
        <dbReference type="UniProtKB" id="P10297"/>
    </source>
</evidence>
<evidence type="ECO:0000255" key="2"/>
<evidence type="ECO:0000269" key="3">
    <source>
    </source>
</evidence>
<evidence type="ECO:0000269" key="4">
    <source>
    </source>
</evidence>
<evidence type="ECO:0000269" key="5">
    <source>
    </source>
</evidence>
<evidence type="ECO:0000305" key="6"/>
<evidence type="ECO:0007744" key="7">
    <source>
        <dbReference type="PDB" id="2G5X"/>
    </source>
</evidence>
<keyword id="KW-0002">3D-structure</keyword>
<keyword id="KW-0903">Direct protein sequencing</keyword>
<keyword id="KW-1015">Disulfide bond</keyword>
<keyword id="KW-0378">Hydrolase</keyword>
<keyword id="KW-0611">Plant defense</keyword>
<keyword id="KW-0652">Protein synthesis inhibitor</keyword>
<keyword id="KW-0800">Toxin</keyword>
<reference evidence="6" key="1">
    <citation type="journal article" date="2006" name="Biol. Chem.">
        <title>Sequence determination of lychnin, a type 1 ribosome-inactivating protein from Lychnis chalcedonica seeds.</title>
        <authorList>
            <person name="Chambery A."/>
            <person name="de Donato A."/>
            <person name="Bolognesi A."/>
            <person name="Polito L."/>
            <person name="Stirpe F."/>
            <person name="Parente A."/>
        </authorList>
    </citation>
    <scope>PROTEIN SEQUENCE</scope>
    <scope>MASS SPECTROMETRY</scope>
    <scope>DISULFIDE BOND</scope>
    <source>
        <tissue evidence="4">Seed</tissue>
    </source>
</reference>
<reference evidence="6" key="2">
    <citation type="journal article" date="1990" name="Biochim. Biophys. Acta">
        <title>Purification and properties of new ribosome-inactivating proteins with RNA N-glycosidase activity.</title>
        <authorList>
            <person name="Bolognesi A."/>
            <person name="Barbieri L."/>
            <person name="Abbondanza A."/>
            <person name="Falasca A.I."/>
            <person name="Carnicelli D."/>
            <person name="Battelli M.G."/>
            <person name="Stirpe F."/>
        </authorList>
    </citation>
    <scope>IDENTIFICATION</scope>
    <scope>FUNCTION</scope>
</reference>
<reference key="3">
    <citation type="journal article" date="2003" name="Acta Crystallogr. D">
        <title>Crystallization and preliminary X-ray diffraction analysis of two ribosome-inactivating proteins: lychnin and dianthin 30.</title>
        <authorList>
            <person name="Fermani S."/>
            <person name="Falini G."/>
            <person name="Ripamonti A."/>
            <person name="Bolognesi A."/>
            <person name="Polito L."/>
            <person name="Stirpe F."/>
        </authorList>
    </citation>
    <scope>CRYSTALLIZATION</scope>
    <scope>SUBUNIT</scope>
</reference>
<reference evidence="7" key="4">
    <citation type="submission" date="2006-02" db="PDB data bank">
        <title>Crystal structure of lychnin a type 1 ribosome inactivating protein (rip).</title>
        <authorList>
            <person name="Fermani S."/>
            <person name="Falini G."/>
            <person name="Tosi G."/>
            <person name="Ripamonti A."/>
            <person name="Polito L."/>
            <person name="Bolognesi A."/>
            <person name="Stirpe F."/>
        </authorList>
    </citation>
    <scope>X-RAY CRYSTALLOGRAPHY (1.70 ANGSTROMS)</scope>
</reference>
<sequence>RPSWTVDSDSAKYSSFLDSLREEFGRGTPKVCNIPVTKKANNDKFVLVNLVLPFNRNTITLAFRASDAYLVGFQDRDSKTNKLRANFFSDEYRALSGKYKSIFTDAEVLAPALPCASTYTDLQNKAGVSREKLSLGVSSLQTAFTAVYGKVFTGKNVAKFALISIQMVAEAARFKYIEDQVINRGMYSSFEAGARITLLENNWSKISEQYHKSCKLGGGQFTEEEMKLGLLLYN</sequence>
<organism>
    <name type="scientific">Silene chalcedonica</name>
    <name type="common">Maltese-cross</name>
    <name type="synonym">Lychnis chalcedonica</name>
    <dbReference type="NCBI Taxonomy" id="39855"/>
    <lineage>
        <taxon>Eukaryota</taxon>
        <taxon>Viridiplantae</taxon>
        <taxon>Streptophyta</taxon>
        <taxon>Embryophyta</taxon>
        <taxon>Tracheophyta</taxon>
        <taxon>Spermatophyta</taxon>
        <taxon>Magnoliopsida</taxon>
        <taxon>eudicotyledons</taxon>
        <taxon>Gunneridae</taxon>
        <taxon>Pentapetalae</taxon>
        <taxon>Caryophyllales</taxon>
        <taxon>Caryophyllaceae</taxon>
        <taxon>Sileneae</taxon>
        <taxon>Silene</taxon>
        <taxon>Silene subgen. Lychnis</taxon>
        <taxon>Silene sect. Lychnis</taxon>
    </lineage>
</organism>
<protein>
    <recommendedName>
        <fullName>Ribosome-inactivating protein lychnin</fullName>
        <ecNumber>3.2.2.22</ecNumber>
    </recommendedName>
</protein>
<accession>P85101</accession>
<name>RIPLY_SILCH</name>
<feature type="chain" id="PRO_0000283747" description="Ribosome-inactivating protein lychnin">
    <location>
        <begin position="1"/>
        <end position="234"/>
    </location>
</feature>
<feature type="active site" evidence="1">
    <location>
        <position position="170"/>
    </location>
</feature>
<feature type="disulfide bond" evidence="4">
    <location>
        <begin position="32"/>
        <end position="115"/>
    </location>
</feature>
<proteinExistence type="evidence at protein level"/>
<dbReference type="EC" id="3.2.2.22"/>
<dbReference type="PDB" id="2G5X">
    <property type="method" value="X-ray"/>
    <property type="resolution" value="1.70 A"/>
    <property type="chains" value="A=1-234"/>
</dbReference>
<dbReference type="PDBsum" id="2G5X"/>
<dbReference type="SMR" id="P85101"/>
<dbReference type="GO" id="GO:0030597">
    <property type="term" value="F:RNA glycosylase activity"/>
    <property type="evidence" value="ECO:0000314"/>
    <property type="project" value="UniProtKB"/>
</dbReference>
<dbReference type="GO" id="GO:0030598">
    <property type="term" value="F:rRNA N-glycosylase activity"/>
    <property type="evidence" value="ECO:0000314"/>
    <property type="project" value="UniProtKB"/>
</dbReference>
<dbReference type="GO" id="GO:0090729">
    <property type="term" value="F:toxin activity"/>
    <property type="evidence" value="ECO:0007669"/>
    <property type="project" value="UniProtKB-KW"/>
</dbReference>
<dbReference type="GO" id="GO:0006952">
    <property type="term" value="P:defense response"/>
    <property type="evidence" value="ECO:0007669"/>
    <property type="project" value="UniProtKB-KW"/>
</dbReference>
<dbReference type="GO" id="GO:0017148">
    <property type="term" value="P:negative regulation of translation"/>
    <property type="evidence" value="ECO:0000314"/>
    <property type="project" value="UniProtKB"/>
</dbReference>
<dbReference type="Gene3D" id="3.40.420.10">
    <property type="entry name" value="Ricin (A subunit), domain 1"/>
    <property type="match status" value="1"/>
</dbReference>
<dbReference type="Gene3D" id="4.10.470.10">
    <property type="entry name" value="Ricin (A Subunit), domain 2"/>
    <property type="match status" value="1"/>
</dbReference>
<dbReference type="InterPro" id="IPR036041">
    <property type="entry name" value="Ribosome-inact_prot_sf"/>
</dbReference>
<dbReference type="InterPro" id="IPR017989">
    <property type="entry name" value="Ribosome_inactivat_1/2"/>
</dbReference>
<dbReference type="InterPro" id="IPR001574">
    <property type="entry name" value="Ribosome_inactivat_prot"/>
</dbReference>
<dbReference type="InterPro" id="IPR017988">
    <property type="entry name" value="Ribosome_inactivat_prot_CS"/>
</dbReference>
<dbReference type="InterPro" id="IPR016138">
    <property type="entry name" value="Ribosome_inactivat_prot_sub1"/>
</dbReference>
<dbReference type="InterPro" id="IPR016139">
    <property type="entry name" value="Ribosome_inactivat_prot_sub2"/>
</dbReference>
<dbReference type="PANTHER" id="PTHR33453">
    <property type="match status" value="1"/>
</dbReference>
<dbReference type="PANTHER" id="PTHR33453:SF34">
    <property type="entry name" value="RIBOSOME-INACTIVATING PROTEIN"/>
    <property type="match status" value="1"/>
</dbReference>
<dbReference type="Pfam" id="PF00161">
    <property type="entry name" value="RIP"/>
    <property type="match status" value="1"/>
</dbReference>
<dbReference type="PRINTS" id="PR00396">
    <property type="entry name" value="SHIGARICIN"/>
</dbReference>
<dbReference type="SUPFAM" id="SSF56371">
    <property type="entry name" value="Ribosome inactivating proteins (RIP)"/>
    <property type="match status" value="1"/>
</dbReference>
<dbReference type="PROSITE" id="PS00275">
    <property type="entry name" value="SHIGA_RICIN"/>
    <property type="match status" value="1"/>
</dbReference>